<evidence type="ECO:0000250" key="1"/>
<evidence type="ECO:0000250" key="2">
    <source>
        <dbReference type="UniProtKB" id="P33643"/>
    </source>
</evidence>
<evidence type="ECO:0000255" key="3">
    <source>
        <dbReference type="PROSITE-ProRule" id="PRU00182"/>
    </source>
</evidence>
<evidence type="ECO:0000305" key="4"/>
<comment type="function">
    <text evidence="2">Responsible for synthesis of pseudouridine from uracil at positions 1911, 1915 and 1917 in 23S ribosomal RNA.</text>
</comment>
<comment type="catalytic activity">
    <reaction evidence="2">
        <text>uridine(1911/1915/1917) in 23S rRNA = pseudouridine(1911/1915/1917) in 23S rRNA</text>
        <dbReference type="Rhea" id="RHEA:42524"/>
        <dbReference type="Rhea" id="RHEA-COMP:10097"/>
        <dbReference type="Rhea" id="RHEA-COMP:10098"/>
        <dbReference type="ChEBI" id="CHEBI:65314"/>
        <dbReference type="ChEBI" id="CHEBI:65315"/>
        <dbReference type="EC" id="5.4.99.23"/>
    </reaction>
</comment>
<comment type="subcellular location">
    <subcellularLocation>
        <location evidence="2">Cytoplasm</location>
    </subcellularLocation>
    <text evidence="2">Associates with late stage pre-50S ribosomal subunits.</text>
</comment>
<comment type="similarity">
    <text evidence="4">Belongs to the pseudouridine synthase RluA family.</text>
</comment>
<name>RLUD_YERPE</name>
<organism>
    <name type="scientific">Yersinia pestis</name>
    <dbReference type="NCBI Taxonomy" id="632"/>
    <lineage>
        <taxon>Bacteria</taxon>
        <taxon>Pseudomonadati</taxon>
        <taxon>Pseudomonadota</taxon>
        <taxon>Gammaproteobacteria</taxon>
        <taxon>Enterobacterales</taxon>
        <taxon>Yersiniaceae</taxon>
        <taxon>Yersinia</taxon>
    </lineage>
</organism>
<feature type="chain" id="PRO_0000162709" description="Ribosomal large subunit pseudouridine synthase D">
    <location>
        <begin position="1"/>
        <end position="325"/>
    </location>
</feature>
<feature type="domain" description="S4 RNA-binding" evidence="3">
    <location>
        <begin position="18"/>
        <end position="91"/>
    </location>
</feature>
<feature type="active site" evidence="1">
    <location>
        <position position="139"/>
    </location>
</feature>
<feature type="sequence conflict" description="In Ref. 3; AAS60921." evidence="4" ref="3">
    <original>R</original>
    <variation>S</variation>
    <location>
        <position position="291"/>
    </location>
</feature>
<keyword id="KW-0963">Cytoplasm</keyword>
<keyword id="KW-0413">Isomerase</keyword>
<keyword id="KW-1185">Reference proteome</keyword>
<keyword id="KW-0694">RNA-binding</keyword>
<keyword id="KW-0698">rRNA processing</keyword>
<sequence>MAQQVQLSATVAESQLGQRLDQALAELFPDYSRSRIKEWILDSRVTVNGKKINKPKEKVLGGELVAIDAQIEEDARWAPQEIPLDIVYEDNDILVINKPRGLVVHPGAGNPDGTVLNALLHYYPEIMDVPRAGIVHRLDKDTTGLMVVAKTVPAQTRLVEALQAREITREYEAVAIGNMTAGGRVDEPISRHSTKRTHMAVHPMGKPATTHYRIMEHFRAHTRLRLRLETGRTHQIRVHMSHINHPLVGDQLYGGRPRPPKGASDSFIAILRGFDRQALHATMLRLYHPIRGIQMEWHAALPEDMVELINALKADTEEFKDQMDW</sequence>
<reference key="1">
    <citation type="journal article" date="2001" name="Nature">
        <title>Genome sequence of Yersinia pestis, the causative agent of plague.</title>
        <authorList>
            <person name="Parkhill J."/>
            <person name="Wren B.W."/>
            <person name="Thomson N.R."/>
            <person name="Titball R.W."/>
            <person name="Holden M.T.G."/>
            <person name="Prentice M.B."/>
            <person name="Sebaihia M."/>
            <person name="James K.D."/>
            <person name="Churcher C.M."/>
            <person name="Mungall K.L."/>
            <person name="Baker S."/>
            <person name="Basham D."/>
            <person name="Bentley S.D."/>
            <person name="Brooks K."/>
            <person name="Cerdeno-Tarraga A.-M."/>
            <person name="Chillingworth T."/>
            <person name="Cronin A."/>
            <person name="Davies R.M."/>
            <person name="Davis P."/>
            <person name="Dougan G."/>
            <person name="Feltwell T."/>
            <person name="Hamlin N."/>
            <person name="Holroyd S."/>
            <person name="Jagels K."/>
            <person name="Karlyshev A.V."/>
            <person name="Leather S."/>
            <person name="Moule S."/>
            <person name="Oyston P.C.F."/>
            <person name="Quail M.A."/>
            <person name="Rutherford K.M."/>
            <person name="Simmonds M."/>
            <person name="Skelton J."/>
            <person name="Stevens K."/>
            <person name="Whitehead S."/>
            <person name="Barrell B.G."/>
        </authorList>
    </citation>
    <scope>NUCLEOTIDE SEQUENCE [LARGE SCALE GENOMIC DNA]</scope>
    <source>
        <strain>CO-92 / Biovar Orientalis</strain>
    </source>
</reference>
<reference key="2">
    <citation type="journal article" date="2002" name="J. Bacteriol.">
        <title>Genome sequence of Yersinia pestis KIM.</title>
        <authorList>
            <person name="Deng W."/>
            <person name="Burland V."/>
            <person name="Plunkett G. III"/>
            <person name="Boutin A."/>
            <person name="Mayhew G.F."/>
            <person name="Liss P."/>
            <person name="Perna N.T."/>
            <person name="Rose D.J."/>
            <person name="Mau B."/>
            <person name="Zhou S."/>
            <person name="Schwartz D.C."/>
            <person name="Fetherston J.D."/>
            <person name="Lindler L.E."/>
            <person name="Brubaker R.R."/>
            <person name="Plano G.V."/>
            <person name="Straley S.C."/>
            <person name="McDonough K.A."/>
            <person name="Nilles M.L."/>
            <person name="Matson J.S."/>
            <person name="Blattner F.R."/>
            <person name="Perry R.D."/>
        </authorList>
    </citation>
    <scope>NUCLEOTIDE SEQUENCE [LARGE SCALE GENOMIC DNA]</scope>
    <source>
        <strain>KIM10+ / Biovar Mediaevalis</strain>
    </source>
</reference>
<reference key="3">
    <citation type="journal article" date="2004" name="DNA Res.">
        <title>Complete genome sequence of Yersinia pestis strain 91001, an isolate avirulent to humans.</title>
        <authorList>
            <person name="Song Y."/>
            <person name="Tong Z."/>
            <person name="Wang J."/>
            <person name="Wang L."/>
            <person name="Guo Z."/>
            <person name="Han Y."/>
            <person name="Zhang J."/>
            <person name="Pei D."/>
            <person name="Zhou D."/>
            <person name="Qin H."/>
            <person name="Pang X."/>
            <person name="Han Y."/>
            <person name="Zhai J."/>
            <person name="Li M."/>
            <person name="Cui B."/>
            <person name="Qi Z."/>
            <person name="Jin L."/>
            <person name="Dai R."/>
            <person name="Chen F."/>
            <person name="Li S."/>
            <person name="Ye C."/>
            <person name="Du Z."/>
            <person name="Lin W."/>
            <person name="Wang J."/>
            <person name="Yu J."/>
            <person name="Yang H."/>
            <person name="Wang J."/>
            <person name="Huang P."/>
            <person name="Yang R."/>
        </authorList>
    </citation>
    <scope>NUCLEOTIDE SEQUENCE [LARGE SCALE GENOMIC DNA]</scope>
    <source>
        <strain>91001 / Biovar Mediaevalis</strain>
    </source>
</reference>
<dbReference type="EC" id="5.4.99.23" evidence="2"/>
<dbReference type="EMBL" id="AL590842">
    <property type="protein sequence ID" value="CAL21870.1"/>
    <property type="molecule type" value="Genomic_DNA"/>
</dbReference>
<dbReference type="EMBL" id="AE009952">
    <property type="protein sequence ID" value="AAM84494.1"/>
    <property type="molecule type" value="Genomic_DNA"/>
</dbReference>
<dbReference type="EMBL" id="AE017042">
    <property type="protein sequence ID" value="AAS60921.1"/>
    <property type="molecule type" value="Genomic_DNA"/>
</dbReference>
<dbReference type="PIR" id="AC0398">
    <property type="entry name" value="AC0398"/>
</dbReference>
<dbReference type="RefSeq" id="WP_002209470.1">
    <property type="nucleotide sequence ID" value="NZ_WUCM01000132.1"/>
</dbReference>
<dbReference type="RefSeq" id="YP_002348177.1">
    <property type="nucleotide sequence ID" value="NC_003143.1"/>
</dbReference>
<dbReference type="SMR" id="Q8ZBV7"/>
<dbReference type="STRING" id="214092.YPO3277"/>
<dbReference type="PaxDb" id="214092-YPO3277"/>
<dbReference type="DNASU" id="1145859"/>
<dbReference type="EnsemblBacteria" id="AAS60921">
    <property type="protein sequence ID" value="AAS60921"/>
    <property type="gene ID" value="YP_0654"/>
</dbReference>
<dbReference type="GeneID" id="57975438"/>
<dbReference type="KEGG" id="ype:YPO3277"/>
<dbReference type="KEGG" id="ypk:y0912"/>
<dbReference type="KEGG" id="ypm:YP_0654"/>
<dbReference type="PATRIC" id="fig|214092.21.peg.3745"/>
<dbReference type="eggNOG" id="COG0564">
    <property type="taxonomic scope" value="Bacteria"/>
</dbReference>
<dbReference type="HOGENOM" id="CLU_016902_4_0_6"/>
<dbReference type="OMA" id="KSERAYT"/>
<dbReference type="OrthoDB" id="9807829at2"/>
<dbReference type="Proteomes" id="UP000000815">
    <property type="component" value="Chromosome"/>
</dbReference>
<dbReference type="Proteomes" id="UP000001019">
    <property type="component" value="Chromosome"/>
</dbReference>
<dbReference type="Proteomes" id="UP000002490">
    <property type="component" value="Chromosome"/>
</dbReference>
<dbReference type="GO" id="GO:0005737">
    <property type="term" value="C:cytoplasm"/>
    <property type="evidence" value="ECO:0007669"/>
    <property type="project" value="UniProtKB-SubCell"/>
</dbReference>
<dbReference type="GO" id="GO:0160140">
    <property type="term" value="F:23S rRNA pseudouridine(1911/1915/1917) synthase activity"/>
    <property type="evidence" value="ECO:0007669"/>
    <property type="project" value="UniProtKB-EC"/>
</dbReference>
<dbReference type="GO" id="GO:0009982">
    <property type="term" value="F:pseudouridine synthase activity"/>
    <property type="evidence" value="ECO:0000318"/>
    <property type="project" value="GO_Central"/>
</dbReference>
<dbReference type="GO" id="GO:0003723">
    <property type="term" value="F:RNA binding"/>
    <property type="evidence" value="ECO:0007669"/>
    <property type="project" value="UniProtKB-KW"/>
</dbReference>
<dbReference type="GO" id="GO:0000455">
    <property type="term" value="P:enzyme-directed rRNA pseudouridine synthesis"/>
    <property type="evidence" value="ECO:0000318"/>
    <property type="project" value="GO_Central"/>
</dbReference>
<dbReference type="CDD" id="cd02869">
    <property type="entry name" value="PseudoU_synth_RluA_like"/>
    <property type="match status" value="1"/>
</dbReference>
<dbReference type="CDD" id="cd00165">
    <property type="entry name" value="S4"/>
    <property type="match status" value="1"/>
</dbReference>
<dbReference type="FunFam" id="3.10.290.10:FF:000011">
    <property type="entry name" value="Pseudouridine synthase"/>
    <property type="match status" value="1"/>
</dbReference>
<dbReference type="FunFam" id="3.30.2350.10:FF:000004">
    <property type="entry name" value="Pseudouridine synthase"/>
    <property type="match status" value="1"/>
</dbReference>
<dbReference type="Gene3D" id="6.10.140.230">
    <property type="match status" value="1"/>
</dbReference>
<dbReference type="Gene3D" id="3.30.2350.10">
    <property type="entry name" value="Pseudouridine synthase"/>
    <property type="match status" value="1"/>
</dbReference>
<dbReference type="Gene3D" id="3.10.290.10">
    <property type="entry name" value="RNA-binding S4 domain"/>
    <property type="match status" value="1"/>
</dbReference>
<dbReference type="InterPro" id="IPR020103">
    <property type="entry name" value="PsdUridine_synth_cat_dom_sf"/>
</dbReference>
<dbReference type="InterPro" id="IPR006224">
    <property type="entry name" value="PsdUridine_synth_RluA-like_CS"/>
</dbReference>
<dbReference type="InterPro" id="IPR006225">
    <property type="entry name" value="PsdUridine_synth_RluC/D"/>
</dbReference>
<dbReference type="InterPro" id="IPR006145">
    <property type="entry name" value="PsdUridine_synth_RsuA/RluA"/>
</dbReference>
<dbReference type="InterPro" id="IPR050188">
    <property type="entry name" value="RluA_PseudoU_synthase"/>
</dbReference>
<dbReference type="InterPro" id="IPR002942">
    <property type="entry name" value="S4_RNA-bd"/>
</dbReference>
<dbReference type="InterPro" id="IPR036986">
    <property type="entry name" value="S4_RNA-bd_sf"/>
</dbReference>
<dbReference type="NCBIfam" id="NF008385">
    <property type="entry name" value="PRK11180.1"/>
    <property type="match status" value="1"/>
</dbReference>
<dbReference type="NCBIfam" id="TIGR00005">
    <property type="entry name" value="rluA_subfam"/>
    <property type="match status" value="1"/>
</dbReference>
<dbReference type="PANTHER" id="PTHR21600">
    <property type="entry name" value="MITOCHONDRIAL RNA PSEUDOURIDINE SYNTHASE"/>
    <property type="match status" value="1"/>
</dbReference>
<dbReference type="PANTHER" id="PTHR21600:SF44">
    <property type="entry name" value="RIBOSOMAL LARGE SUBUNIT PSEUDOURIDINE SYNTHASE D"/>
    <property type="match status" value="1"/>
</dbReference>
<dbReference type="Pfam" id="PF00849">
    <property type="entry name" value="PseudoU_synth_2"/>
    <property type="match status" value="1"/>
</dbReference>
<dbReference type="Pfam" id="PF01479">
    <property type="entry name" value="S4"/>
    <property type="match status" value="1"/>
</dbReference>
<dbReference type="SMART" id="SM00363">
    <property type="entry name" value="S4"/>
    <property type="match status" value="1"/>
</dbReference>
<dbReference type="SUPFAM" id="SSF55174">
    <property type="entry name" value="Alpha-L RNA-binding motif"/>
    <property type="match status" value="1"/>
</dbReference>
<dbReference type="SUPFAM" id="SSF55120">
    <property type="entry name" value="Pseudouridine synthase"/>
    <property type="match status" value="1"/>
</dbReference>
<dbReference type="PROSITE" id="PS01129">
    <property type="entry name" value="PSI_RLU"/>
    <property type="match status" value="1"/>
</dbReference>
<dbReference type="PROSITE" id="PS50889">
    <property type="entry name" value="S4"/>
    <property type="match status" value="1"/>
</dbReference>
<proteinExistence type="inferred from homology"/>
<accession>Q8ZBV7</accession>
<accession>Q0WC11</accession>
<protein>
    <recommendedName>
        <fullName evidence="2">Ribosomal large subunit pseudouridine synthase D</fullName>
        <ecNumber evidence="2">5.4.99.23</ecNumber>
    </recommendedName>
    <alternativeName>
        <fullName>23S rRNA pseudouridine(1911/1915/1917) synthase</fullName>
    </alternativeName>
    <alternativeName>
        <fullName>rRNA pseudouridylate synthase D</fullName>
    </alternativeName>
    <alternativeName>
        <fullName>rRNA-uridine isomerase D</fullName>
    </alternativeName>
</protein>
<gene>
    <name type="primary">rluD</name>
    <name type="synonym">sfhB</name>
    <name type="ordered locus">YPO3277</name>
    <name type="ordered locus">y0912</name>
    <name type="ordered locus">YP_0654</name>
</gene>